<reference key="1">
    <citation type="journal article" date="1998" name="Eur. J. Biochem.">
        <title>Structural characteristics of bullfrog (Rana catesbeiana) transthyretin and its cDNA. Comparison of its pattern of expression during metamorphosis with that of lipocalin.</title>
        <authorList>
            <person name="Yamauchi K."/>
            <person name="Takeuchi H.-A."/>
            <person name="Overall M."/>
            <person name="Dziadek M."/>
            <person name="Munro S.L.A."/>
            <person name="Schreiber G."/>
        </authorList>
    </citation>
    <scope>NUCLEOTIDE SEQUENCE [MRNA]</scope>
    <scope>TISSUE SPECIFICITY</scope>
    <scope>DEVELOPMENTAL STAGE</scope>
    <source>
        <tissue>Tadpole liver</tissue>
    </source>
</reference>
<reference key="2">
    <citation type="journal article" date="1993" name="Endocrinology">
        <title>Purification and characterization of a 3,5,3'-L-triiodothyronine-specific binding protein from bullfrog tadpole plasma: a homolog of mammalian transthyretin.</title>
        <authorList>
            <person name="Yamauchi K."/>
            <person name="Kasahara T."/>
            <person name="Hayashi H."/>
            <person name="Horiuchi R."/>
        </authorList>
    </citation>
    <scope>PROTEIN SEQUENCE OF 25-43</scope>
    <scope>FUNCTION</scope>
    <scope>SUBUNIT</scope>
    <scope>SUBCELLULAR LOCATION</scope>
    <scope>TISSUE SPECIFICITY</scope>
    <scope>DEVELOPMENTAL STAGE</scope>
    <source>
        <tissue>Tadpole</tissue>
    </source>
</reference>
<reference key="3">
    <citation type="journal article" date="2000" name="Gen. Comp. Endocrinol.">
        <title>Effect of diethylstilbestrol on thyroid hormone binding to amphibian transthyretins.</title>
        <authorList>
            <person name="Yamauchi K."/>
            <person name="Prapunpoj P."/>
            <person name="Richardson S.J."/>
        </authorList>
    </citation>
    <scope>FUNCTION</scope>
    <scope>INHIBITION OF TRIIODOTHYRONINE-BINDING</scope>
    <scope>TISSUE SPECIFICITY</scope>
    <scope>DEVELOPMENTAL STAGE</scope>
</reference>
<protein>
    <recommendedName>
        <fullName>Transthyretin</fullName>
    </recommendedName>
    <alternativeName>
        <fullName>Prealbumin</fullName>
    </alternativeName>
    <alternativeName>
        <fullName>THBP</fullName>
    </alternativeName>
    <alternativeName>
        <fullName>Tadpole T3-binding protein</fullName>
        <shortName>T-T3BP</shortName>
    </alternativeName>
</protein>
<evidence type="ECO:0000250" key="1"/>
<evidence type="ECO:0000250" key="2">
    <source>
        <dbReference type="UniProtKB" id="P02766"/>
    </source>
</evidence>
<evidence type="ECO:0000269" key="3">
    <source>
    </source>
</evidence>
<evidence type="ECO:0000269" key="4">
    <source>
    </source>
</evidence>
<evidence type="ECO:0000269" key="5">
    <source>
    </source>
</evidence>
<evidence type="ECO:0000305" key="6"/>
<keyword id="KW-0903">Direct protein sequencing</keyword>
<keyword id="KW-0372">Hormone</keyword>
<keyword id="KW-0964">Secreted</keyword>
<keyword id="KW-0732">Signal</keyword>
<keyword id="KW-0765">Sulfation</keyword>
<keyword id="KW-0795">Thyroid hormone</keyword>
<keyword id="KW-0813">Transport</keyword>
<proteinExistence type="evidence at protein level"/>
<dbReference type="EMBL" id="AB006134">
    <property type="protein sequence ID" value="BAA33456.1"/>
    <property type="molecule type" value="mRNA"/>
</dbReference>
<dbReference type="SMR" id="P31779"/>
<dbReference type="GO" id="GO:0005576">
    <property type="term" value="C:extracellular region"/>
    <property type="evidence" value="ECO:0000314"/>
    <property type="project" value="UniProtKB"/>
</dbReference>
<dbReference type="GO" id="GO:0005615">
    <property type="term" value="C:extracellular space"/>
    <property type="evidence" value="ECO:0007669"/>
    <property type="project" value="TreeGrafter"/>
</dbReference>
<dbReference type="GO" id="GO:0005179">
    <property type="term" value="F:hormone activity"/>
    <property type="evidence" value="ECO:0007669"/>
    <property type="project" value="UniProtKB-KW"/>
</dbReference>
<dbReference type="GO" id="GO:0042802">
    <property type="term" value="F:identical protein binding"/>
    <property type="evidence" value="ECO:0000353"/>
    <property type="project" value="UniProtKB"/>
</dbReference>
<dbReference type="GO" id="GO:0070324">
    <property type="term" value="F:thyroid hormone binding"/>
    <property type="evidence" value="ECO:0000314"/>
    <property type="project" value="UniProtKB"/>
</dbReference>
<dbReference type="GO" id="GO:0006144">
    <property type="term" value="P:purine nucleobase metabolic process"/>
    <property type="evidence" value="ECO:0007669"/>
    <property type="project" value="TreeGrafter"/>
</dbReference>
<dbReference type="GO" id="GO:0070327">
    <property type="term" value="P:thyroid hormone transport"/>
    <property type="evidence" value="ECO:0000270"/>
    <property type="project" value="UniProtKB"/>
</dbReference>
<dbReference type="FunFam" id="2.60.40.180:FF:000002">
    <property type="entry name" value="Transthyretin"/>
    <property type="match status" value="1"/>
</dbReference>
<dbReference type="Gene3D" id="2.60.40.180">
    <property type="entry name" value="Transthyretin/hydroxyisourate hydrolase domain"/>
    <property type="match status" value="1"/>
</dbReference>
<dbReference type="InterPro" id="IPR023418">
    <property type="entry name" value="Thyroxine_BS"/>
</dbReference>
<dbReference type="InterPro" id="IPR000895">
    <property type="entry name" value="Transthyretin/HIU_hydrolase"/>
</dbReference>
<dbReference type="InterPro" id="IPR023416">
    <property type="entry name" value="Transthyretin/HIU_hydrolase_d"/>
</dbReference>
<dbReference type="InterPro" id="IPR036817">
    <property type="entry name" value="Transthyretin/HIU_hydrolase_sf"/>
</dbReference>
<dbReference type="InterPro" id="IPR023419">
    <property type="entry name" value="Transthyretin_CS"/>
</dbReference>
<dbReference type="PANTHER" id="PTHR10395:SF12">
    <property type="entry name" value="TRANSTHYRETIN"/>
    <property type="match status" value="1"/>
</dbReference>
<dbReference type="PANTHER" id="PTHR10395">
    <property type="entry name" value="URICASE AND TRANSTHYRETIN-RELATED"/>
    <property type="match status" value="1"/>
</dbReference>
<dbReference type="Pfam" id="PF00576">
    <property type="entry name" value="Transthyretin"/>
    <property type="match status" value="1"/>
</dbReference>
<dbReference type="PRINTS" id="PR00189">
    <property type="entry name" value="TRNSTHYRETIN"/>
</dbReference>
<dbReference type="SMART" id="SM00095">
    <property type="entry name" value="TR_THY"/>
    <property type="match status" value="1"/>
</dbReference>
<dbReference type="SUPFAM" id="SSF49472">
    <property type="entry name" value="Transthyretin (synonym: prealbumin)"/>
    <property type="match status" value="1"/>
</dbReference>
<dbReference type="PROSITE" id="PS00768">
    <property type="entry name" value="TRANSTHYRETIN_1"/>
    <property type="match status" value="1"/>
</dbReference>
<dbReference type="PROSITE" id="PS00769">
    <property type="entry name" value="TRANSTHYRETIN_2"/>
    <property type="match status" value="1"/>
</dbReference>
<sequence length="153" mass="16973">MAYYNTLALLTIFIFSGAFHRAQGTHGEADSKCPLMVKVLDAVRGIPAAKLPVKVFKQNEDKSWDLISSGTTSSDGEIHNLATEEQFVEGIYKLEFATKRFWSKLGLTPFHEYVDVVFTANDAGHRHYTTAVLLTPYSFSTTAVVSDVKEAHV</sequence>
<accession>P31779</accession>
<accession>O93483</accession>
<comment type="function">
    <text evidence="3 4">Thyroid hormone-binding protein, with a much higher binding affinity for triiodothyronine (T3) than for thyroxine (T4). Probably transports triiodothyronine from the bloodstream to the brain.</text>
</comment>
<comment type="subunit">
    <text evidence="1">Homotetramer. Dimer of dimers. In the homotetramer, subunits assemble around a central channel that can accommodate two ligand molecules. Interacts with RBP4 (By similarity).</text>
</comment>
<comment type="subcellular location">
    <subcellularLocation>
        <location evidence="4">Secreted</location>
    </subcellularLocation>
</comment>
<comment type="tissue specificity">
    <text evidence="3 4 5">Detected in plasma (at protein level). Expressed during metamorphosis in tadpole liver but not in tadpole brain, nor adult liver.</text>
</comment>
<comment type="developmental stage">
    <text evidence="3 4 5">Expressed in tadpoles from premetamorphic stage X, increasing until the end of prometamorphic stage (stage XX). Expression then declines during metamorphic climax stages (stages XXI-XXV), becoming undetectable at stage XXV and in adults.</text>
</comment>
<comment type="domain">
    <text evidence="1">The N-terminus strongly influences thyroid hormone-binding properties.</text>
</comment>
<comment type="PTM">
    <text evidence="2">Sulfonation of the reactive cysteine Cys-33 enhances the stability of the native conformation of TTR, avoiding misassembly of the protein leading to amyloid formation.</text>
</comment>
<comment type="miscellaneous">
    <text>A number of compounds can compete with and disrupt triiodothyronine (T3)-binding. Binds the synthetic estrogen diethylstilbestrol (DES) with the same affinity as T3.</text>
</comment>
<comment type="similarity">
    <text evidence="6">Belongs to the transthyretin family.</text>
</comment>
<name>TTHY_AQUCT</name>
<feature type="signal peptide" evidence="4">
    <location>
        <begin position="1"/>
        <end position="24"/>
    </location>
</feature>
<feature type="chain" id="PRO_0000035771" description="Transthyretin">
    <location>
        <begin position="25"/>
        <end position="153"/>
    </location>
</feature>
<feature type="binding site" evidence="2">
    <location>
        <position position="38"/>
    </location>
    <ligand>
        <name>L-thyroxine</name>
        <dbReference type="ChEBI" id="CHEBI:58448"/>
    </ligand>
</feature>
<feature type="binding site" evidence="2">
    <location>
        <position position="77"/>
    </location>
    <ligand>
        <name>L-thyroxine</name>
        <dbReference type="ChEBI" id="CHEBI:58448"/>
    </ligand>
</feature>
<feature type="binding site" evidence="2">
    <location>
        <position position="140"/>
    </location>
    <ligand>
        <name>L-thyroxine</name>
        <dbReference type="ChEBI" id="CHEBI:58448"/>
    </ligand>
</feature>
<feature type="modified residue" description="Sulfocysteine" evidence="2">
    <location>
        <position position="33"/>
    </location>
</feature>
<feature type="sequence conflict" description="In Ref. 2; AA sequence." evidence="6" ref="2">
    <location>
        <position position="34"/>
    </location>
</feature>
<organism>
    <name type="scientific">Aquarana catesbeiana</name>
    <name type="common">American bullfrog</name>
    <name type="synonym">Rana catesbeiana</name>
    <dbReference type="NCBI Taxonomy" id="8400"/>
    <lineage>
        <taxon>Eukaryota</taxon>
        <taxon>Metazoa</taxon>
        <taxon>Chordata</taxon>
        <taxon>Craniata</taxon>
        <taxon>Vertebrata</taxon>
        <taxon>Euteleostomi</taxon>
        <taxon>Amphibia</taxon>
        <taxon>Batrachia</taxon>
        <taxon>Anura</taxon>
        <taxon>Neobatrachia</taxon>
        <taxon>Ranoidea</taxon>
        <taxon>Ranidae</taxon>
        <taxon>Aquarana</taxon>
    </lineage>
</organism>